<sequence>MLQQPTIRHPIAVSLGAIAGALSRYYLSLWFAQRFGITFPYGTLFINITGCLAMGFFYALALERVSLISPEIRLLIAVGFLGAYTTFSTYALDTFTLLGDRNLVAAGFYWAGSTILGVISIQIGIILGRLCGKGLGV</sequence>
<evidence type="ECO:0000255" key="1">
    <source>
        <dbReference type="HAMAP-Rule" id="MF_00454"/>
    </source>
</evidence>
<evidence type="ECO:0000305" key="2"/>
<gene>
    <name evidence="1" type="primary">fluC</name>
    <name evidence="1" type="synonym">crcB</name>
    <name type="ordered locus">Ava_3649</name>
</gene>
<dbReference type="EMBL" id="CP000117">
    <property type="protein sequence ID" value="ABA23255.1"/>
    <property type="status" value="ALT_INIT"/>
    <property type="molecule type" value="Genomic_DNA"/>
</dbReference>
<dbReference type="SMR" id="Q3M6Y1"/>
<dbReference type="STRING" id="240292.Ava_3649"/>
<dbReference type="KEGG" id="ava:Ava_3649"/>
<dbReference type="eggNOG" id="COG0239">
    <property type="taxonomic scope" value="Bacteria"/>
</dbReference>
<dbReference type="HOGENOM" id="CLU_114342_3_0_3"/>
<dbReference type="Proteomes" id="UP000002533">
    <property type="component" value="Chromosome"/>
</dbReference>
<dbReference type="GO" id="GO:0005886">
    <property type="term" value="C:plasma membrane"/>
    <property type="evidence" value="ECO:0007669"/>
    <property type="project" value="UniProtKB-SubCell"/>
</dbReference>
<dbReference type="GO" id="GO:0062054">
    <property type="term" value="F:fluoride channel activity"/>
    <property type="evidence" value="ECO:0007669"/>
    <property type="project" value="UniProtKB-UniRule"/>
</dbReference>
<dbReference type="GO" id="GO:0046872">
    <property type="term" value="F:metal ion binding"/>
    <property type="evidence" value="ECO:0007669"/>
    <property type="project" value="UniProtKB-KW"/>
</dbReference>
<dbReference type="GO" id="GO:0140114">
    <property type="term" value="P:cellular detoxification of fluoride"/>
    <property type="evidence" value="ECO:0007669"/>
    <property type="project" value="UniProtKB-UniRule"/>
</dbReference>
<dbReference type="HAMAP" id="MF_00454">
    <property type="entry name" value="FluC"/>
    <property type="match status" value="1"/>
</dbReference>
<dbReference type="InterPro" id="IPR003691">
    <property type="entry name" value="FluC"/>
</dbReference>
<dbReference type="NCBIfam" id="TIGR00494">
    <property type="entry name" value="crcB"/>
    <property type="match status" value="1"/>
</dbReference>
<dbReference type="PANTHER" id="PTHR28259">
    <property type="entry name" value="FLUORIDE EXPORT PROTEIN 1-RELATED"/>
    <property type="match status" value="1"/>
</dbReference>
<dbReference type="PANTHER" id="PTHR28259:SF1">
    <property type="entry name" value="FLUORIDE EXPORT PROTEIN 1-RELATED"/>
    <property type="match status" value="1"/>
</dbReference>
<dbReference type="Pfam" id="PF02537">
    <property type="entry name" value="CRCB"/>
    <property type="match status" value="1"/>
</dbReference>
<feature type="chain" id="PRO_0000252857" description="Fluoride-specific ion channel FluC">
    <location>
        <begin position="1"/>
        <end position="137"/>
    </location>
</feature>
<feature type="transmembrane region" description="Helical" evidence="1">
    <location>
        <begin position="11"/>
        <end position="31"/>
    </location>
</feature>
<feature type="transmembrane region" description="Helical" evidence="1">
    <location>
        <begin position="42"/>
        <end position="62"/>
    </location>
</feature>
<feature type="transmembrane region" description="Helical" evidence="1">
    <location>
        <begin position="75"/>
        <end position="95"/>
    </location>
</feature>
<feature type="transmembrane region" description="Helical" evidence="1">
    <location>
        <begin position="107"/>
        <end position="127"/>
    </location>
</feature>
<feature type="binding site" evidence="1">
    <location>
        <position position="82"/>
    </location>
    <ligand>
        <name>Na(+)</name>
        <dbReference type="ChEBI" id="CHEBI:29101"/>
        <note>structural</note>
    </ligand>
</feature>
<feature type="binding site" evidence="1">
    <location>
        <position position="85"/>
    </location>
    <ligand>
        <name>Na(+)</name>
        <dbReference type="ChEBI" id="CHEBI:29101"/>
        <note>structural</note>
    </ligand>
</feature>
<accession>Q3M6Y1</accession>
<name>FLUC_TRIV2</name>
<protein>
    <recommendedName>
        <fullName evidence="1">Fluoride-specific ion channel FluC</fullName>
    </recommendedName>
</protein>
<proteinExistence type="inferred from homology"/>
<reference key="1">
    <citation type="journal article" date="2014" name="Stand. Genomic Sci.">
        <title>Complete genome sequence of Anabaena variabilis ATCC 29413.</title>
        <authorList>
            <person name="Thiel T."/>
            <person name="Pratte B.S."/>
            <person name="Zhong J."/>
            <person name="Goodwin L."/>
            <person name="Copeland A."/>
            <person name="Lucas S."/>
            <person name="Han C."/>
            <person name="Pitluck S."/>
            <person name="Land M.L."/>
            <person name="Kyrpides N.C."/>
            <person name="Woyke T."/>
        </authorList>
    </citation>
    <scope>NUCLEOTIDE SEQUENCE [LARGE SCALE GENOMIC DNA]</scope>
    <source>
        <strain>ATCC 29413 / PCC 7937</strain>
    </source>
</reference>
<comment type="function">
    <text evidence="1">Fluoride-specific ion channel. Important for reducing fluoride concentration in the cell, thus reducing its toxicity.</text>
</comment>
<comment type="catalytic activity">
    <reaction evidence="1">
        <text>fluoride(in) = fluoride(out)</text>
        <dbReference type="Rhea" id="RHEA:76159"/>
        <dbReference type="ChEBI" id="CHEBI:17051"/>
    </reaction>
    <physiologicalReaction direction="left-to-right" evidence="1">
        <dbReference type="Rhea" id="RHEA:76160"/>
    </physiologicalReaction>
</comment>
<comment type="activity regulation">
    <text evidence="1">Na(+) is not transported, but it plays an essential structural role and its presence is essential for fluoride channel function.</text>
</comment>
<comment type="subcellular location">
    <subcellularLocation>
        <location evidence="1">Cell inner membrane</location>
        <topology evidence="1">Multi-pass membrane protein</topology>
    </subcellularLocation>
</comment>
<comment type="similarity">
    <text evidence="1">Belongs to the fluoride channel Fluc/FEX (TC 1.A.43) family.</text>
</comment>
<comment type="sequence caution" evidence="2">
    <conflict type="erroneous initiation">
        <sequence resource="EMBL-CDS" id="ABA23255"/>
    </conflict>
</comment>
<organism>
    <name type="scientific">Trichormus variabilis (strain ATCC 29413 / PCC 7937)</name>
    <name type="common">Anabaena variabilis</name>
    <dbReference type="NCBI Taxonomy" id="240292"/>
    <lineage>
        <taxon>Bacteria</taxon>
        <taxon>Bacillati</taxon>
        <taxon>Cyanobacteriota</taxon>
        <taxon>Cyanophyceae</taxon>
        <taxon>Nostocales</taxon>
        <taxon>Nostocaceae</taxon>
        <taxon>Trichormus</taxon>
    </lineage>
</organism>
<keyword id="KW-0997">Cell inner membrane</keyword>
<keyword id="KW-1003">Cell membrane</keyword>
<keyword id="KW-0407">Ion channel</keyword>
<keyword id="KW-0406">Ion transport</keyword>
<keyword id="KW-0472">Membrane</keyword>
<keyword id="KW-0479">Metal-binding</keyword>
<keyword id="KW-0915">Sodium</keyword>
<keyword id="KW-0812">Transmembrane</keyword>
<keyword id="KW-1133">Transmembrane helix</keyword>
<keyword id="KW-0813">Transport</keyword>